<feature type="chain" id="PRO_0000074021" description="DNA-directed RNA polymerase subunit Rpo1C">
    <location>
        <begin position="1"/>
        <end position="379"/>
    </location>
</feature>
<sequence length="379" mass="42423">MISREELLSKLSQVLPQPLYKEVEEAVRDLDDEKALRLVYRVLKLYVTSLIDPGEAIGIVTAQSIGEPGTQMILRSFHYAGLREFSMARGLPRLIEVVDARRTPSTPLMYVYLKPPYNKSREAAESVAKKIQQVTLETLAKEVDVDYVAGTVTITLDQEQLKYRGLTLKDVEKIVAKAKGKDVAISMRGYTITASLTTPDILKIRKIKDKILQIKISGIKGVRKVVLQYDSKNDEWYIVTEGTNLEAVLQLEEVDPTRTYSNDLHEVEEVLGIEATRALVAQEIKRVLEEQGLDVDIRHMYLVADAMTWSGRLRPIGRHGVVGSKESPLARAAFEVTVKTLIEASVRGEDELFKGVVESIIAGKYVPIGTGIVRLLMQF</sequence>
<organism>
    <name type="scientific">Pyrobaculum aerophilum (strain ATCC 51768 / DSM 7523 / JCM 9630 / CIP 104966 / NBRC 100827 / IM2)</name>
    <dbReference type="NCBI Taxonomy" id="178306"/>
    <lineage>
        <taxon>Archaea</taxon>
        <taxon>Thermoproteota</taxon>
        <taxon>Thermoprotei</taxon>
        <taxon>Thermoproteales</taxon>
        <taxon>Thermoproteaceae</taxon>
        <taxon>Pyrobaculum</taxon>
    </lineage>
</organism>
<keyword id="KW-0963">Cytoplasm</keyword>
<keyword id="KW-0238">DNA-binding</keyword>
<keyword id="KW-0240">DNA-directed RNA polymerase</keyword>
<keyword id="KW-0548">Nucleotidyltransferase</keyword>
<keyword id="KW-1185">Reference proteome</keyword>
<keyword id="KW-0804">Transcription</keyword>
<keyword id="KW-0808">Transferase</keyword>
<comment type="function">
    <text evidence="1">DNA-dependent RNA polymerase (RNAP) catalyzes the transcription of DNA into RNA using the four ribonucleoside triphosphates as substrates. Forms part of the jaw domain.</text>
</comment>
<comment type="catalytic activity">
    <reaction evidence="1">
        <text>RNA(n) + a ribonucleoside 5'-triphosphate = RNA(n+1) + diphosphate</text>
        <dbReference type="Rhea" id="RHEA:21248"/>
        <dbReference type="Rhea" id="RHEA-COMP:14527"/>
        <dbReference type="Rhea" id="RHEA-COMP:17342"/>
        <dbReference type="ChEBI" id="CHEBI:33019"/>
        <dbReference type="ChEBI" id="CHEBI:61557"/>
        <dbReference type="ChEBI" id="CHEBI:140395"/>
        <dbReference type="EC" id="2.7.7.6"/>
    </reaction>
</comment>
<comment type="subunit">
    <text evidence="1">Part of the RNA polymerase complex.</text>
</comment>
<comment type="subcellular location">
    <subcellularLocation>
        <location evidence="1">Cytoplasm</location>
    </subcellularLocation>
</comment>
<comment type="similarity">
    <text evidence="1">Belongs to the RNA polymerase beta' chain family.</text>
</comment>
<gene>
    <name evidence="1" type="primary">rpo1C</name>
    <name evidence="1" type="synonym">rpoA2</name>
    <name type="ordered locus">PAE0667</name>
</gene>
<evidence type="ECO:0000255" key="1">
    <source>
        <dbReference type="HAMAP-Rule" id="MF_00411"/>
    </source>
</evidence>
<protein>
    <recommendedName>
        <fullName evidence="1">DNA-directed RNA polymerase subunit Rpo1C</fullName>
        <ecNumber evidence="1">2.7.7.6</ecNumber>
    </recommendedName>
    <alternativeName>
        <fullName evidence="1">DNA-directed RNA polymerase subunit A''</fullName>
    </alternativeName>
</protein>
<name>RPO1C_PYRAE</name>
<accession>Q8ZYQ7</accession>
<dbReference type="EC" id="2.7.7.6" evidence="1"/>
<dbReference type="EMBL" id="AE009441">
    <property type="protein sequence ID" value="AAL62936.1"/>
    <property type="molecule type" value="Genomic_DNA"/>
</dbReference>
<dbReference type="RefSeq" id="WP_011007408.1">
    <property type="nucleotide sequence ID" value="NC_003364.1"/>
</dbReference>
<dbReference type="SMR" id="Q8ZYQ7"/>
<dbReference type="FunCoup" id="Q8ZYQ7">
    <property type="interactions" value="8"/>
</dbReference>
<dbReference type="STRING" id="178306.PAE0667"/>
<dbReference type="EnsemblBacteria" id="AAL62936">
    <property type="protein sequence ID" value="AAL62936"/>
    <property type="gene ID" value="PAE0667"/>
</dbReference>
<dbReference type="GeneID" id="1465161"/>
<dbReference type="KEGG" id="pai:PAE0667"/>
<dbReference type="PATRIC" id="fig|178306.9.peg.481"/>
<dbReference type="eggNOG" id="arCOG04256">
    <property type="taxonomic scope" value="Archaea"/>
</dbReference>
<dbReference type="HOGENOM" id="CLU_037097_1_0_2"/>
<dbReference type="InParanoid" id="Q8ZYQ7"/>
<dbReference type="Proteomes" id="UP000002439">
    <property type="component" value="Chromosome"/>
</dbReference>
<dbReference type="GO" id="GO:0005737">
    <property type="term" value="C:cytoplasm"/>
    <property type="evidence" value="ECO:0007669"/>
    <property type="project" value="UniProtKB-SubCell"/>
</dbReference>
<dbReference type="GO" id="GO:0000428">
    <property type="term" value="C:DNA-directed RNA polymerase complex"/>
    <property type="evidence" value="ECO:0007669"/>
    <property type="project" value="UniProtKB-KW"/>
</dbReference>
<dbReference type="GO" id="GO:0003677">
    <property type="term" value="F:DNA binding"/>
    <property type="evidence" value="ECO:0007669"/>
    <property type="project" value="UniProtKB-UniRule"/>
</dbReference>
<dbReference type="GO" id="GO:0003899">
    <property type="term" value="F:DNA-directed RNA polymerase activity"/>
    <property type="evidence" value="ECO:0007669"/>
    <property type="project" value="UniProtKB-UniRule"/>
</dbReference>
<dbReference type="GO" id="GO:0006351">
    <property type="term" value="P:DNA-templated transcription"/>
    <property type="evidence" value="ECO:0007669"/>
    <property type="project" value="UniProtKB-UniRule"/>
</dbReference>
<dbReference type="CDD" id="cd06528">
    <property type="entry name" value="RNAP_A"/>
    <property type="match status" value="1"/>
</dbReference>
<dbReference type="Gene3D" id="1.10.150.390">
    <property type="match status" value="1"/>
</dbReference>
<dbReference type="HAMAP" id="MF_00411">
    <property type="entry name" value="RNApol_arch_Rpo1C"/>
    <property type="match status" value="1"/>
</dbReference>
<dbReference type="InterPro" id="IPR045867">
    <property type="entry name" value="DNA-dir_RpoC_beta_prime"/>
</dbReference>
<dbReference type="InterPro" id="IPR007081">
    <property type="entry name" value="RNA_pol_Rpb1_5"/>
</dbReference>
<dbReference type="InterPro" id="IPR012757">
    <property type="entry name" value="RPO1C"/>
</dbReference>
<dbReference type="NCBIfam" id="TIGR02389">
    <property type="entry name" value="RNA_pol_rpoA2"/>
    <property type="match status" value="1"/>
</dbReference>
<dbReference type="PANTHER" id="PTHR19376">
    <property type="entry name" value="DNA-DIRECTED RNA POLYMERASE"/>
    <property type="match status" value="1"/>
</dbReference>
<dbReference type="PANTHER" id="PTHR19376:SF32">
    <property type="entry name" value="DNA-DIRECTED RNA POLYMERASE III SUBUNIT RPC1"/>
    <property type="match status" value="1"/>
</dbReference>
<dbReference type="Pfam" id="PF04998">
    <property type="entry name" value="RNA_pol_Rpb1_5"/>
    <property type="match status" value="1"/>
</dbReference>
<dbReference type="SUPFAM" id="SSF64484">
    <property type="entry name" value="beta and beta-prime subunits of DNA dependent RNA-polymerase"/>
    <property type="match status" value="1"/>
</dbReference>
<proteinExistence type="inferred from homology"/>
<reference key="1">
    <citation type="journal article" date="2002" name="Proc. Natl. Acad. Sci. U.S.A.">
        <title>Genome sequence of the hyperthermophilic crenarchaeon Pyrobaculum aerophilum.</title>
        <authorList>
            <person name="Fitz-Gibbon S.T."/>
            <person name="Ladner H."/>
            <person name="Kim U.-J."/>
            <person name="Stetter K.O."/>
            <person name="Simon M.I."/>
            <person name="Miller J.H."/>
        </authorList>
    </citation>
    <scope>NUCLEOTIDE SEQUENCE [LARGE SCALE GENOMIC DNA]</scope>
    <source>
        <strain>ATCC 51768 / DSM 7523 / JCM 9630 / CIP 104966 / NBRC 100827 / IM2</strain>
    </source>
</reference>